<sequence length="5" mass="649">RYLPT</sequence>
<reference key="1">
    <citation type="journal article" date="1990" name="Peptides">
        <title>Identification of proctolin in the central nervous system of the horseshoe crab, Limulus polyphemus.</title>
        <authorList>
            <person name="Groome J.R."/>
            <person name="Tillinghast E.K."/>
            <person name="Townley M.A."/>
            <person name="Vetrovs A."/>
            <person name="Watson W.H. III"/>
            <person name="Hunt D.F."/>
            <person name="Griffin P.R."/>
            <person name="Alexander J.E."/>
            <person name="Shabanowitz J."/>
        </authorList>
    </citation>
    <scope>PROTEIN SEQUENCE</scope>
</reference>
<reference key="2">
    <citation type="journal article" date="2016" name="Peptides">
        <title>[des-Arg(1)]-proctolin: a novel NEP-like enzyme inhibitor identified in Tityus serrulatus venom.</title>
        <authorList>
            <person name="Duzzi B."/>
            <person name="Cajado-Carvalho D."/>
            <person name="Kuniyoshi A.K."/>
            <person name="Kodama R.T."/>
            <person name="Gozzo F.C."/>
            <person name="Fioramonte M."/>
            <person name="Tambourgi D.V."/>
            <person name="Portaro F.V."/>
            <person name="Rioli V."/>
        </authorList>
    </citation>
    <scope>FUNCTION</scope>
    <scope>SYNTHESIS</scope>
</reference>
<dbReference type="PIR" id="A60411">
    <property type="entry name" value="A60411"/>
</dbReference>
<dbReference type="Proteomes" id="UP000694941">
    <property type="component" value="Unplaced"/>
</dbReference>
<dbReference type="GO" id="GO:0005576">
    <property type="term" value="C:extracellular region"/>
    <property type="evidence" value="ECO:0007669"/>
    <property type="project" value="UniProtKB-SubCell"/>
</dbReference>
<dbReference type="GO" id="GO:0008236">
    <property type="term" value="F:serine-type peptidase activity"/>
    <property type="evidence" value="ECO:0007669"/>
    <property type="project" value="UniProtKB-KW"/>
</dbReference>
<dbReference type="GO" id="GO:0007218">
    <property type="term" value="P:neuropeptide signaling pathway"/>
    <property type="evidence" value="ECO:0007669"/>
    <property type="project" value="UniProtKB-KW"/>
</dbReference>
<dbReference type="GO" id="GO:0006508">
    <property type="term" value="P:proteolysis"/>
    <property type="evidence" value="ECO:0007669"/>
    <property type="project" value="UniProtKB-KW"/>
</dbReference>
<accession>P67858</accession>
<accession>P01373</accession>
<comment type="function">
    <text evidence="2">Stimulates cardiac output and hindgut motility, modulates visceral and skeletal muscle in many arthropods. Also inhibits activities of the human peptidase neprilysin (NEP/MME) (PubMed:26056922).</text>
</comment>
<comment type="subcellular location">
    <subcellularLocation>
        <location>Secreted</location>
    </subcellularLocation>
</comment>
<comment type="tissue specificity">
    <text>Found in the crab pericardial organs.</text>
</comment>
<organism>
    <name type="scientific">Limulus polyphemus</name>
    <name type="common">Atlantic horseshoe crab</name>
    <dbReference type="NCBI Taxonomy" id="6850"/>
    <lineage>
        <taxon>Eukaryota</taxon>
        <taxon>Metazoa</taxon>
        <taxon>Ecdysozoa</taxon>
        <taxon>Arthropoda</taxon>
        <taxon>Chelicerata</taxon>
        <taxon>Merostomata</taxon>
        <taxon>Xiphosura</taxon>
        <taxon>Limulidae</taxon>
        <taxon>Limulus</taxon>
    </lineage>
</organism>
<name>PRCT_LIMPO</name>
<evidence type="ECO:0000269" key="1">
    <source>
    </source>
</evidence>
<evidence type="ECO:0000269" key="2">
    <source>
    </source>
</evidence>
<protein>
    <recommendedName>
        <fullName>Proctolin</fullName>
    </recommendedName>
</protein>
<keyword id="KW-0903">Direct protein sequencing</keyword>
<keyword id="KW-0378">Hydrolase</keyword>
<keyword id="KW-0527">Neuropeptide</keyword>
<keyword id="KW-0645">Protease</keyword>
<keyword id="KW-0964">Secreted</keyword>
<keyword id="KW-0720">Serine protease</keyword>
<feature type="peptide" id="PRO_0000044210" description="Proctolin" evidence="1">
    <location>
        <begin position="1"/>
        <end position="5"/>
    </location>
</feature>
<proteinExistence type="evidence at protein level"/>